<accession>B1J0A5</accession>
<organism>
    <name type="scientific">Escherichia coli (strain ATCC 8739 / DSM 1576 / NBRC 3972 / NCIMB 8545 / WDCM 00012 / Crooks)</name>
    <dbReference type="NCBI Taxonomy" id="481805"/>
    <lineage>
        <taxon>Bacteria</taxon>
        <taxon>Pseudomonadati</taxon>
        <taxon>Pseudomonadota</taxon>
        <taxon>Gammaproteobacteria</taxon>
        <taxon>Enterobacterales</taxon>
        <taxon>Enterobacteriaceae</taxon>
        <taxon>Escherichia</taxon>
    </lineage>
</organism>
<gene>
    <name evidence="1" type="primary">dctA</name>
    <name type="ordered locus">EcolC_0189</name>
</gene>
<sequence>MKTSLFKSLYFQVLTAIAIGILLGHFYPEIGEQMKPLGDGFVKLIKMIIAPVIFCTVVTGIAGMESMKAVGRTGAVALLYFEIVSTIALIIGLIIVNVVQPGAGMNVDPATLDAKAVAVYADQAKDQGIVAFIMDVIPASVIGAFASGNILQVLLFAVLFGFALHRLGSKGQLIFNVIESFSQVIFGIINMIMRLAPIGAFGAMAFTIGKYGVGTLVQLGQLIICFYITCILFVVLVLGSIAKATGFSIFKFIRYIREELLIVLGTSSSESALPRMLDKMEKLGCRKSVVGLVIPTGYSFNLDGTSIYLTMAAVFIAQATNSQMDIVHQITLLIVLLLSSKGAAGVTGSGFIVLAATLSAVGHLPVAGLALILGIDRFMSEARALTNLVGNGVATIVVAKWVKELDHKKLDDVLNNRAPDGKTHELSS</sequence>
<name>DCTA_ECOLC</name>
<comment type="function">
    <text evidence="1">Responsible for the transport of dicarboxylates such as succinate, fumarate, and malate from the periplasm across the membrane.</text>
</comment>
<comment type="subcellular location">
    <subcellularLocation>
        <location evidence="1">Cell inner membrane</location>
        <topology evidence="1">Multi-pass membrane protein</topology>
    </subcellularLocation>
</comment>
<comment type="similarity">
    <text evidence="1">Belongs to the dicarboxylate/amino acid:cation symporter (DAACS) (TC 2.A.23) family.</text>
</comment>
<feature type="chain" id="PRO_1000085901" description="C4-dicarboxylate transport protein">
    <location>
        <begin position="1"/>
        <end position="428"/>
    </location>
</feature>
<feature type="transmembrane region" description="Helical" evidence="1">
    <location>
        <begin position="8"/>
        <end position="28"/>
    </location>
</feature>
<feature type="transmembrane region" description="Helical" evidence="1">
    <location>
        <begin position="44"/>
        <end position="64"/>
    </location>
</feature>
<feature type="transmembrane region" description="Helical" evidence="1">
    <location>
        <begin position="76"/>
        <end position="96"/>
    </location>
</feature>
<feature type="transmembrane region" description="Helical" evidence="1">
    <location>
        <begin position="142"/>
        <end position="162"/>
    </location>
</feature>
<feature type="transmembrane region" description="Helical" evidence="1">
    <location>
        <begin position="184"/>
        <end position="204"/>
    </location>
</feature>
<feature type="transmembrane region" description="Helical" evidence="1">
    <location>
        <begin position="222"/>
        <end position="242"/>
    </location>
</feature>
<feature type="transmembrane region" description="Helical" evidence="1">
    <location>
        <begin position="326"/>
        <end position="346"/>
    </location>
</feature>
<feature type="transmembrane region" description="Helical" evidence="1">
    <location>
        <begin position="352"/>
        <end position="372"/>
    </location>
</feature>
<keyword id="KW-0997">Cell inner membrane</keyword>
<keyword id="KW-1003">Cell membrane</keyword>
<keyword id="KW-0472">Membrane</keyword>
<keyword id="KW-0769">Symport</keyword>
<keyword id="KW-0812">Transmembrane</keyword>
<keyword id="KW-1133">Transmembrane helix</keyword>
<keyword id="KW-0813">Transport</keyword>
<dbReference type="EMBL" id="CP000946">
    <property type="protein sequence ID" value="ACA75870.1"/>
    <property type="molecule type" value="Genomic_DNA"/>
</dbReference>
<dbReference type="RefSeq" id="WP_000858214.1">
    <property type="nucleotide sequence ID" value="NZ_MTFT01000007.1"/>
</dbReference>
<dbReference type="SMR" id="B1J0A5"/>
<dbReference type="GeneID" id="93778248"/>
<dbReference type="KEGG" id="ecl:EcolC_0189"/>
<dbReference type="HOGENOM" id="CLU_019375_7_0_6"/>
<dbReference type="GO" id="GO:0005886">
    <property type="term" value="C:plasma membrane"/>
    <property type="evidence" value="ECO:0007669"/>
    <property type="project" value="UniProtKB-SubCell"/>
</dbReference>
<dbReference type="GO" id="GO:0015138">
    <property type="term" value="F:fumarate transmembrane transporter activity"/>
    <property type="evidence" value="ECO:0007669"/>
    <property type="project" value="TreeGrafter"/>
</dbReference>
<dbReference type="GO" id="GO:0015366">
    <property type="term" value="F:malate:proton symporter activity"/>
    <property type="evidence" value="ECO:0007669"/>
    <property type="project" value="TreeGrafter"/>
</dbReference>
<dbReference type="GO" id="GO:0015141">
    <property type="term" value="F:succinate transmembrane transporter activity"/>
    <property type="evidence" value="ECO:0007669"/>
    <property type="project" value="TreeGrafter"/>
</dbReference>
<dbReference type="GO" id="GO:0070778">
    <property type="term" value="P:L-aspartate transmembrane transport"/>
    <property type="evidence" value="ECO:0007669"/>
    <property type="project" value="TreeGrafter"/>
</dbReference>
<dbReference type="FunFam" id="1.10.3860.10:FF:000001">
    <property type="entry name" value="C4-dicarboxylate transport protein"/>
    <property type="match status" value="1"/>
</dbReference>
<dbReference type="Gene3D" id="1.10.3860.10">
    <property type="entry name" value="Sodium:dicarboxylate symporter"/>
    <property type="match status" value="1"/>
</dbReference>
<dbReference type="HAMAP" id="MF_01300">
    <property type="entry name" value="C4_dicarb_transport"/>
    <property type="match status" value="1"/>
</dbReference>
<dbReference type="InterPro" id="IPR023954">
    <property type="entry name" value="C4_dicarb_transport"/>
</dbReference>
<dbReference type="InterPro" id="IPR001991">
    <property type="entry name" value="Na-dicarboxylate_symporter"/>
</dbReference>
<dbReference type="InterPro" id="IPR018107">
    <property type="entry name" value="Na-dicarboxylate_symporter_CS"/>
</dbReference>
<dbReference type="InterPro" id="IPR036458">
    <property type="entry name" value="Na:dicarbo_symporter_sf"/>
</dbReference>
<dbReference type="NCBIfam" id="NF002461">
    <property type="entry name" value="PRK01663.1"/>
    <property type="match status" value="1"/>
</dbReference>
<dbReference type="NCBIfam" id="NF009587">
    <property type="entry name" value="PRK13027.1"/>
    <property type="match status" value="1"/>
</dbReference>
<dbReference type="PANTHER" id="PTHR42865:SF1">
    <property type="entry name" value="AEROBIC C4-DICARBOXYLATE TRANSPORT PROTEIN"/>
    <property type="match status" value="1"/>
</dbReference>
<dbReference type="PANTHER" id="PTHR42865">
    <property type="entry name" value="PROTON/GLUTAMATE-ASPARTATE SYMPORTER"/>
    <property type="match status" value="1"/>
</dbReference>
<dbReference type="Pfam" id="PF00375">
    <property type="entry name" value="SDF"/>
    <property type="match status" value="1"/>
</dbReference>
<dbReference type="PRINTS" id="PR00173">
    <property type="entry name" value="EDTRNSPORT"/>
</dbReference>
<dbReference type="SUPFAM" id="SSF118215">
    <property type="entry name" value="Proton glutamate symport protein"/>
    <property type="match status" value="1"/>
</dbReference>
<dbReference type="PROSITE" id="PS00713">
    <property type="entry name" value="NA_DICARBOXYL_SYMP_1"/>
    <property type="match status" value="1"/>
</dbReference>
<dbReference type="PROSITE" id="PS00714">
    <property type="entry name" value="NA_DICARBOXYL_SYMP_2"/>
    <property type="match status" value="1"/>
</dbReference>
<reference key="1">
    <citation type="submission" date="2008-02" db="EMBL/GenBank/DDBJ databases">
        <title>Complete sequence of Escherichia coli C str. ATCC 8739.</title>
        <authorList>
            <person name="Copeland A."/>
            <person name="Lucas S."/>
            <person name="Lapidus A."/>
            <person name="Glavina del Rio T."/>
            <person name="Dalin E."/>
            <person name="Tice H."/>
            <person name="Bruce D."/>
            <person name="Goodwin L."/>
            <person name="Pitluck S."/>
            <person name="Kiss H."/>
            <person name="Brettin T."/>
            <person name="Detter J.C."/>
            <person name="Han C."/>
            <person name="Kuske C.R."/>
            <person name="Schmutz J."/>
            <person name="Larimer F."/>
            <person name="Land M."/>
            <person name="Hauser L."/>
            <person name="Kyrpides N."/>
            <person name="Mikhailova N."/>
            <person name="Ingram L."/>
            <person name="Richardson P."/>
        </authorList>
    </citation>
    <scope>NUCLEOTIDE SEQUENCE [LARGE SCALE GENOMIC DNA]</scope>
    <source>
        <strain>ATCC 8739 / DSM 1576 / NBRC 3972 / NCIMB 8545 / WDCM 00012 / Crooks</strain>
    </source>
</reference>
<protein>
    <recommendedName>
        <fullName evidence="1">C4-dicarboxylate transport protein</fullName>
    </recommendedName>
</protein>
<evidence type="ECO:0000255" key="1">
    <source>
        <dbReference type="HAMAP-Rule" id="MF_01300"/>
    </source>
</evidence>
<proteinExistence type="inferred from homology"/>